<dbReference type="EC" id="3.6.5.-" evidence="1"/>
<dbReference type="EMBL" id="AE000511">
    <property type="protein sequence ID" value="AAD07372.1"/>
    <property type="molecule type" value="Genomic_DNA"/>
</dbReference>
<dbReference type="PIR" id="G64557">
    <property type="entry name" value="G64557"/>
</dbReference>
<dbReference type="RefSeq" id="NP_207101.1">
    <property type="nucleotide sequence ID" value="NC_000915.1"/>
</dbReference>
<dbReference type="SMR" id="O25074"/>
<dbReference type="DIP" id="DIP-3205N"/>
<dbReference type="FunCoup" id="O25074">
    <property type="interactions" value="358"/>
</dbReference>
<dbReference type="IntAct" id="O25074">
    <property type="interactions" value="5"/>
</dbReference>
<dbReference type="MINT" id="O25074"/>
<dbReference type="STRING" id="85962.HP_0303"/>
<dbReference type="PaxDb" id="85962-C694_01530"/>
<dbReference type="EnsemblBacteria" id="AAD07372">
    <property type="protein sequence ID" value="AAD07372"/>
    <property type="gene ID" value="HP_0303"/>
</dbReference>
<dbReference type="KEGG" id="heo:C694_01530"/>
<dbReference type="KEGG" id="hpy:HP_0303"/>
<dbReference type="PATRIC" id="fig|85962.47.peg.323"/>
<dbReference type="eggNOG" id="COG0536">
    <property type="taxonomic scope" value="Bacteria"/>
</dbReference>
<dbReference type="InParanoid" id="O25074"/>
<dbReference type="OrthoDB" id="9807318at2"/>
<dbReference type="PhylomeDB" id="O25074"/>
<dbReference type="Proteomes" id="UP000000429">
    <property type="component" value="Chromosome"/>
</dbReference>
<dbReference type="GO" id="GO:0005737">
    <property type="term" value="C:cytoplasm"/>
    <property type="evidence" value="ECO:0007669"/>
    <property type="project" value="UniProtKB-SubCell"/>
</dbReference>
<dbReference type="GO" id="GO:0005525">
    <property type="term" value="F:GTP binding"/>
    <property type="evidence" value="ECO:0000318"/>
    <property type="project" value="GO_Central"/>
</dbReference>
<dbReference type="GO" id="GO:0003924">
    <property type="term" value="F:GTPase activity"/>
    <property type="evidence" value="ECO:0000318"/>
    <property type="project" value="GO_Central"/>
</dbReference>
<dbReference type="GO" id="GO:0000287">
    <property type="term" value="F:magnesium ion binding"/>
    <property type="evidence" value="ECO:0007669"/>
    <property type="project" value="InterPro"/>
</dbReference>
<dbReference type="GO" id="GO:0042254">
    <property type="term" value="P:ribosome biogenesis"/>
    <property type="evidence" value="ECO:0007669"/>
    <property type="project" value="UniProtKB-UniRule"/>
</dbReference>
<dbReference type="CDD" id="cd01898">
    <property type="entry name" value="Obg"/>
    <property type="match status" value="1"/>
</dbReference>
<dbReference type="FunFam" id="2.70.210.12:FF:000001">
    <property type="entry name" value="GTPase Obg"/>
    <property type="match status" value="1"/>
</dbReference>
<dbReference type="Gene3D" id="2.70.210.12">
    <property type="entry name" value="GTP1/OBG domain"/>
    <property type="match status" value="1"/>
</dbReference>
<dbReference type="Gene3D" id="3.40.50.300">
    <property type="entry name" value="P-loop containing nucleotide triphosphate hydrolases"/>
    <property type="match status" value="1"/>
</dbReference>
<dbReference type="HAMAP" id="MF_01454">
    <property type="entry name" value="GTPase_Obg"/>
    <property type="match status" value="1"/>
</dbReference>
<dbReference type="InterPro" id="IPR031167">
    <property type="entry name" value="G_OBG"/>
</dbReference>
<dbReference type="InterPro" id="IPR006073">
    <property type="entry name" value="GTP-bd"/>
</dbReference>
<dbReference type="InterPro" id="IPR014100">
    <property type="entry name" value="GTP-bd_Obg/CgtA"/>
</dbReference>
<dbReference type="InterPro" id="IPR006074">
    <property type="entry name" value="GTP1-OBG_CS"/>
</dbReference>
<dbReference type="InterPro" id="IPR006169">
    <property type="entry name" value="GTP1_OBG_dom"/>
</dbReference>
<dbReference type="InterPro" id="IPR036726">
    <property type="entry name" value="GTP1_OBG_dom_sf"/>
</dbReference>
<dbReference type="InterPro" id="IPR045086">
    <property type="entry name" value="OBG_GTPase"/>
</dbReference>
<dbReference type="InterPro" id="IPR027417">
    <property type="entry name" value="P-loop_NTPase"/>
</dbReference>
<dbReference type="NCBIfam" id="TIGR02729">
    <property type="entry name" value="Obg_CgtA"/>
    <property type="match status" value="1"/>
</dbReference>
<dbReference type="NCBIfam" id="NF008955">
    <property type="entry name" value="PRK12297.1"/>
    <property type="match status" value="1"/>
</dbReference>
<dbReference type="NCBIfam" id="NF008956">
    <property type="entry name" value="PRK12299.1"/>
    <property type="match status" value="1"/>
</dbReference>
<dbReference type="PANTHER" id="PTHR11702">
    <property type="entry name" value="DEVELOPMENTALLY REGULATED GTP-BINDING PROTEIN-RELATED"/>
    <property type="match status" value="1"/>
</dbReference>
<dbReference type="PANTHER" id="PTHR11702:SF31">
    <property type="entry name" value="MITOCHONDRIAL RIBOSOME-ASSOCIATED GTPASE 2"/>
    <property type="match status" value="1"/>
</dbReference>
<dbReference type="Pfam" id="PF01018">
    <property type="entry name" value="GTP1_OBG"/>
    <property type="match status" value="1"/>
</dbReference>
<dbReference type="Pfam" id="PF01926">
    <property type="entry name" value="MMR_HSR1"/>
    <property type="match status" value="1"/>
</dbReference>
<dbReference type="PIRSF" id="PIRSF002401">
    <property type="entry name" value="GTP_bd_Obg/CgtA"/>
    <property type="match status" value="1"/>
</dbReference>
<dbReference type="PRINTS" id="PR00326">
    <property type="entry name" value="GTP1OBG"/>
</dbReference>
<dbReference type="SUPFAM" id="SSF82051">
    <property type="entry name" value="Obg GTP-binding protein N-terminal domain"/>
    <property type="match status" value="1"/>
</dbReference>
<dbReference type="SUPFAM" id="SSF52540">
    <property type="entry name" value="P-loop containing nucleoside triphosphate hydrolases"/>
    <property type="match status" value="1"/>
</dbReference>
<dbReference type="PROSITE" id="PS51710">
    <property type="entry name" value="G_OBG"/>
    <property type="match status" value="1"/>
</dbReference>
<dbReference type="PROSITE" id="PS00905">
    <property type="entry name" value="GTP1_OBG"/>
    <property type="match status" value="1"/>
</dbReference>
<dbReference type="PROSITE" id="PS51883">
    <property type="entry name" value="OBG"/>
    <property type="match status" value="1"/>
</dbReference>
<proteinExistence type="inferred from homology"/>
<protein>
    <recommendedName>
        <fullName evidence="1">GTPase Obg</fullName>
        <ecNumber evidence="1">3.6.5.-</ecNumber>
    </recommendedName>
    <alternativeName>
        <fullName evidence="1">GTP-binding protein Obg</fullName>
    </alternativeName>
</protein>
<accession>O25074</accession>
<gene>
    <name evidence="1" type="primary">obg</name>
    <name type="ordered locus">HP_0303</name>
</gene>
<comment type="function">
    <text evidence="1">An essential GTPase which binds GTP, GDP and possibly (p)ppGpp with moderate affinity, with high nucleotide exchange rates and a fairly low GTP hydrolysis rate. Plays a role in control of the cell cycle, stress response, ribosome biogenesis and in those bacteria that undergo differentiation, in morphogenesis control.</text>
</comment>
<comment type="cofactor">
    <cofactor evidence="1">
        <name>Mg(2+)</name>
        <dbReference type="ChEBI" id="CHEBI:18420"/>
    </cofactor>
</comment>
<comment type="subunit">
    <text evidence="1">Monomer.</text>
</comment>
<comment type="subcellular location">
    <subcellularLocation>
        <location evidence="1">Cytoplasm</location>
    </subcellularLocation>
</comment>
<comment type="similarity">
    <text evidence="1">Belongs to the TRAFAC class OBG-HflX-like GTPase superfamily. OBG GTPase family.</text>
</comment>
<keyword id="KW-0963">Cytoplasm</keyword>
<keyword id="KW-0342">GTP-binding</keyword>
<keyword id="KW-0378">Hydrolase</keyword>
<keyword id="KW-0460">Magnesium</keyword>
<keyword id="KW-0479">Metal-binding</keyword>
<keyword id="KW-0547">Nucleotide-binding</keyword>
<keyword id="KW-1185">Reference proteome</keyword>
<reference key="1">
    <citation type="journal article" date="1997" name="Nature">
        <title>The complete genome sequence of the gastric pathogen Helicobacter pylori.</title>
        <authorList>
            <person name="Tomb J.-F."/>
            <person name="White O."/>
            <person name="Kerlavage A.R."/>
            <person name="Clayton R.A."/>
            <person name="Sutton G.G."/>
            <person name="Fleischmann R.D."/>
            <person name="Ketchum K.A."/>
            <person name="Klenk H.-P."/>
            <person name="Gill S.R."/>
            <person name="Dougherty B.A."/>
            <person name="Nelson K.E."/>
            <person name="Quackenbush J."/>
            <person name="Zhou L."/>
            <person name="Kirkness E.F."/>
            <person name="Peterson S.N."/>
            <person name="Loftus B.J."/>
            <person name="Richardson D.L."/>
            <person name="Dodson R.J."/>
            <person name="Khalak H.G."/>
            <person name="Glodek A."/>
            <person name="McKenney K."/>
            <person name="FitzGerald L.M."/>
            <person name="Lee N."/>
            <person name="Adams M.D."/>
            <person name="Hickey E.K."/>
            <person name="Berg D.E."/>
            <person name="Gocayne J.D."/>
            <person name="Utterback T.R."/>
            <person name="Peterson J.D."/>
            <person name="Kelley J.M."/>
            <person name="Cotton M.D."/>
            <person name="Weidman J.F."/>
            <person name="Fujii C."/>
            <person name="Bowman C."/>
            <person name="Watthey L."/>
            <person name="Wallin E."/>
            <person name="Hayes W.S."/>
            <person name="Borodovsky M."/>
            <person name="Karp P.D."/>
            <person name="Smith H.O."/>
            <person name="Fraser C.M."/>
            <person name="Venter J.C."/>
        </authorList>
    </citation>
    <scope>NUCLEOTIDE SEQUENCE [LARGE SCALE GENOMIC DNA]</scope>
    <source>
        <strain>ATCC 700392 / 26695</strain>
    </source>
</reference>
<organism>
    <name type="scientific">Helicobacter pylori (strain ATCC 700392 / 26695)</name>
    <name type="common">Campylobacter pylori</name>
    <dbReference type="NCBI Taxonomy" id="85962"/>
    <lineage>
        <taxon>Bacteria</taxon>
        <taxon>Pseudomonadati</taxon>
        <taxon>Campylobacterota</taxon>
        <taxon>Epsilonproteobacteria</taxon>
        <taxon>Campylobacterales</taxon>
        <taxon>Helicobacteraceae</taxon>
        <taxon>Helicobacter</taxon>
    </lineage>
</organism>
<name>OBG_HELPY</name>
<sequence>MFVDSVEIIIASGKGGPGMVSFRREKFVIKGGPDGGDGGDGGDVYFEVDNNTDTLASFRGTKHHKAKNGAPGGTRNCAGKKGEDKIIVVPPGTQVFVGDELWLDLVEPKERVLALKGGKGGLGNAHFKSATKQQPTYAQKGLEGVEKCVRLELKLIADIGLVGFPNAGKSTLISTISNAKPKIANYEFTTLVPNLGVVSVDEKSGFLMADIPGIIEGASEGKGLGISFLKHIERTKVLAFVLDASRLDLGIKEQYQRLRLELEKFSSALANKPFGVLLNKCDVVENIDEMTKDFCAFLNLGAQKLNEFGLEPYLGFLHPHLTNDFENNPNEQSALFVLPLSAVSALNVHALKFVLLEALP</sequence>
<evidence type="ECO:0000255" key="1">
    <source>
        <dbReference type="HAMAP-Rule" id="MF_01454"/>
    </source>
</evidence>
<evidence type="ECO:0000255" key="2">
    <source>
        <dbReference type="PROSITE-ProRule" id="PRU01231"/>
    </source>
</evidence>
<feature type="chain" id="PRO_0000205439" description="GTPase Obg">
    <location>
        <begin position="1"/>
        <end position="360"/>
    </location>
</feature>
<feature type="domain" description="Obg" evidence="2">
    <location>
        <begin position="1"/>
        <end position="156"/>
    </location>
</feature>
<feature type="domain" description="OBG-type G" evidence="1">
    <location>
        <begin position="157"/>
        <end position="360"/>
    </location>
</feature>
<feature type="binding site" evidence="1">
    <location>
        <begin position="163"/>
        <end position="170"/>
    </location>
    <ligand>
        <name>GTP</name>
        <dbReference type="ChEBI" id="CHEBI:37565"/>
    </ligand>
</feature>
<feature type="binding site" evidence="1">
    <location>
        <position position="170"/>
    </location>
    <ligand>
        <name>Mg(2+)</name>
        <dbReference type="ChEBI" id="CHEBI:18420"/>
    </ligand>
</feature>
<feature type="binding site" evidence="1">
    <location>
        <begin position="188"/>
        <end position="192"/>
    </location>
    <ligand>
        <name>GTP</name>
        <dbReference type="ChEBI" id="CHEBI:37565"/>
    </ligand>
</feature>
<feature type="binding site" evidence="1">
    <location>
        <position position="190"/>
    </location>
    <ligand>
        <name>Mg(2+)</name>
        <dbReference type="ChEBI" id="CHEBI:18420"/>
    </ligand>
</feature>
<feature type="binding site" evidence="1">
    <location>
        <begin position="210"/>
        <end position="213"/>
    </location>
    <ligand>
        <name>GTP</name>
        <dbReference type="ChEBI" id="CHEBI:37565"/>
    </ligand>
</feature>
<feature type="binding site" evidence="1">
    <location>
        <begin position="279"/>
        <end position="282"/>
    </location>
    <ligand>
        <name>GTP</name>
        <dbReference type="ChEBI" id="CHEBI:37565"/>
    </ligand>
</feature>
<feature type="binding site" evidence="1">
    <location>
        <begin position="341"/>
        <end position="343"/>
    </location>
    <ligand>
        <name>GTP</name>
        <dbReference type="ChEBI" id="CHEBI:37565"/>
    </ligand>
</feature>